<proteinExistence type="evidence at protein level"/>
<protein>
    <recommendedName>
        <fullName evidence="7">Basic phospholipase A2 DAV-N6</fullName>
        <shortName>svPLA2</shortName>
        <ecNumber>3.1.1.4</ecNumber>
    </recommendedName>
    <alternativeName>
        <fullName>Phosphatidylcholine 2-acylhydrolase</fullName>
    </alternativeName>
</protein>
<dbReference type="EC" id="3.1.1.4"/>
<dbReference type="EMBL" id="X77649">
    <property type="protein sequence ID" value="CAJ85789.1"/>
    <property type="molecule type" value="mRNA"/>
</dbReference>
<dbReference type="SMR" id="Q1ZY03"/>
<dbReference type="GO" id="GO:0005576">
    <property type="term" value="C:extracellular region"/>
    <property type="evidence" value="ECO:0007669"/>
    <property type="project" value="UniProtKB-SubCell"/>
</dbReference>
<dbReference type="GO" id="GO:0005509">
    <property type="term" value="F:calcium ion binding"/>
    <property type="evidence" value="ECO:0007669"/>
    <property type="project" value="InterPro"/>
</dbReference>
<dbReference type="GO" id="GO:0047498">
    <property type="term" value="F:calcium-dependent phospholipase A2 activity"/>
    <property type="evidence" value="ECO:0007669"/>
    <property type="project" value="TreeGrafter"/>
</dbReference>
<dbReference type="GO" id="GO:0005543">
    <property type="term" value="F:phospholipid binding"/>
    <property type="evidence" value="ECO:0007669"/>
    <property type="project" value="TreeGrafter"/>
</dbReference>
<dbReference type="GO" id="GO:0090729">
    <property type="term" value="F:toxin activity"/>
    <property type="evidence" value="ECO:0007669"/>
    <property type="project" value="UniProtKB-KW"/>
</dbReference>
<dbReference type="GO" id="GO:0050482">
    <property type="term" value="P:arachidonate secretion"/>
    <property type="evidence" value="ECO:0007669"/>
    <property type="project" value="InterPro"/>
</dbReference>
<dbReference type="GO" id="GO:0016042">
    <property type="term" value="P:lipid catabolic process"/>
    <property type="evidence" value="ECO:0007669"/>
    <property type="project" value="UniProtKB-KW"/>
</dbReference>
<dbReference type="GO" id="GO:0042130">
    <property type="term" value="P:negative regulation of T cell proliferation"/>
    <property type="evidence" value="ECO:0007669"/>
    <property type="project" value="TreeGrafter"/>
</dbReference>
<dbReference type="GO" id="GO:0006644">
    <property type="term" value="P:phospholipid metabolic process"/>
    <property type="evidence" value="ECO:0007669"/>
    <property type="project" value="InterPro"/>
</dbReference>
<dbReference type="CDD" id="cd00125">
    <property type="entry name" value="PLA2c"/>
    <property type="match status" value="1"/>
</dbReference>
<dbReference type="FunFam" id="1.20.90.10:FF:000001">
    <property type="entry name" value="Basic phospholipase A2 homolog"/>
    <property type="match status" value="1"/>
</dbReference>
<dbReference type="Gene3D" id="1.20.90.10">
    <property type="entry name" value="Phospholipase A2 domain"/>
    <property type="match status" value="1"/>
</dbReference>
<dbReference type="InterPro" id="IPR001211">
    <property type="entry name" value="PLipase_A2"/>
</dbReference>
<dbReference type="InterPro" id="IPR033112">
    <property type="entry name" value="PLipase_A2_Asp_AS"/>
</dbReference>
<dbReference type="InterPro" id="IPR016090">
    <property type="entry name" value="PLipase_A2_dom"/>
</dbReference>
<dbReference type="InterPro" id="IPR036444">
    <property type="entry name" value="PLipase_A2_dom_sf"/>
</dbReference>
<dbReference type="InterPro" id="IPR033113">
    <property type="entry name" value="PLipase_A2_His_AS"/>
</dbReference>
<dbReference type="PANTHER" id="PTHR11716">
    <property type="entry name" value="PHOSPHOLIPASE A2 FAMILY MEMBER"/>
    <property type="match status" value="1"/>
</dbReference>
<dbReference type="PANTHER" id="PTHR11716:SF9">
    <property type="entry name" value="PHOSPHOLIPASE A2, MEMBRANE ASSOCIATED"/>
    <property type="match status" value="1"/>
</dbReference>
<dbReference type="Pfam" id="PF00068">
    <property type="entry name" value="Phospholip_A2_1"/>
    <property type="match status" value="1"/>
</dbReference>
<dbReference type="PRINTS" id="PR00389">
    <property type="entry name" value="PHPHLIPASEA2"/>
</dbReference>
<dbReference type="SMART" id="SM00085">
    <property type="entry name" value="PA2c"/>
    <property type="match status" value="1"/>
</dbReference>
<dbReference type="SUPFAM" id="SSF48619">
    <property type="entry name" value="Phospholipase A2, PLA2"/>
    <property type="match status" value="1"/>
</dbReference>
<dbReference type="PROSITE" id="PS00119">
    <property type="entry name" value="PA2_ASP"/>
    <property type="match status" value="1"/>
</dbReference>
<dbReference type="PROSITE" id="PS00118">
    <property type="entry name" value="PA2_HIS"/>
    <property type="match status" value="1"/>
</dbReference>
<reference evidence="8" key="1">
    <citation type="journal article" date="1996" name="Toxicon">
        <title>Molecular cloning and deduced primary structures of acidic and basic phospholipases A2 from the venom of Deinagkistrodon acutus.</title>
        <authorList>
            <person name="Wang Y.-M."/>
            <person name="Wang J.-H."/>
            <person name="Tsai I.-H."/>
        </authorList>
    </citation>
    <scope>NUCLEOTIDE SEQUENCE [MRNA]</scope>
    <source>
        <tissue evidence="6">Venom gland</tissue>
    </source>
</reference>
<reference key="2">
    <citation type="journal article" date="2004" name="Biochem. J.">
        <title>Molecular evolution and structure-function relationships of crotoxin-like and asparagine-6-containing phospholipases A2 in pit viper venoms.</title>
        <authorList>
            <person name="Chen Y.-H."/>
            <person name="Wang Y.-M."/>
            <person name="Hseu M.-J."/>
            <person name="Tsai I.-H."/>
        </authorList>
    </citation>
    <scope>PROTEIN SEQUENCE OF 17-39</scope>
    <scope>MASS SPECTROMETRY</scope>
    <scope>SUBCELLULAR LOCATION</scope>
    <source>
        <tissue>Venom</tissue>
    </source>
</reference>
<organism>
    <name type="scientific">Deinagkistrodon acutus</name>
    <name type="common">Hundred-pace snake</name>
    <name type="synonym">Agkistrodon acutus</name>
    <dbReference type="NCBI Taxonomy" id="36307"/>
    <lineage>
        <taxon>Eukaryota</taxon>
        <taxon>Metazoa</taxon>
        <taxon>Chordata</taxon>
        <taxon>Craniata</taxon>
        <taxon>Vertebrata</taxon>
        <taxon>Euteleostomi</taxon>
        <taxon>Lepidosauria</taxon>
        <taxon>Squamata</taxon>
        <taxon>Bifurcata</taxon>
        <taxon>Unidentata</taxon>
        <taxon>Episquamata</taxon>
        <taxon>Toxicofera</taxon>
        <taxon>Serpentes</taxon>
        <taxon>Colubroidea</taxon>
        <taxon>Viperidae</taxon>
        <taxon>Crotalinae</taxon>
        <taxon>Deinagkistrodon</taxon>
    </lineage>
</organism>
<feature type="signal peptide" evidence="5">
    <location>
        <begin position="1"/>
        <end position="16"/>
    </location>
</feature>
<feature type="chain" id="PRO_0000235855" description="Basic phospholipase A2 DAV-N6">
    <location>
        <begin position="17"/>
        <end position="138"/>
    </location>
</feature>
<feature type="active site" evidence="2">
    <location>
        <position position="63"/>
    </location>
</feature>
<feature type="active site" evidence="2">
    <location>
        <position position="105"/>
    </location>
</feature>
<feature type="binding site" evidence="2">
    <location>
        <position position="43"/>
    </location>
    <ligand>
        <name>Ca(2+)</name>
        <dbReference type="ChEBI" id="CHEBI:29108"/>
    </ligand>
</feature>
<feature type="binding site" evidence="2">
    <location>
        <position position="45"/>
    </location>
    <ligand>
        <name>Ca(2+)</name>
        <dbReference type="ChEBI" id="CHEBI:29108"/>
    </ligand>
</feature>
<feature type="binding site" evidence="2">
    <location>
        <position position="47"/>
    </location>
    <ligand>
        <name>Ca(2+)</name>
        <dbReference type="ChEBI" id="CHEBI:29108"/>
    </ligand>
</feature>
<feature type="binding site" evidence="2">
    <location>
        <position position="64"/>
    </location>
    <ligand>
        <name>Ca(2+)</name>
        <dbReference type="ChEBI" id="CHEBI:29108"/>
    </ligand>
</feature>
<feature type="disulfide bond" evidence="2">
    <location>
        <begin position="42"/>
        <end position="131"/>
    </location>
</feature>
<feature type="disulfide bond" evidence="2">
    <location>
        <begin position="44"/>
        <end position="60"/>
    </location>
</feature>
<feature type="disulfide bond" evidence="2">
    <location>
        <begin position="59"/>
        <end position="111"/>
    </location>
</feature>
<feature type="disulfide bond" evidence="2">
    <location>
        <begin position="65"/>
        <end position="138"/>
    </location>
</feature>
<feature type="disulfide bond" evidence="2">
    <location>
        <begin position="66"/>
        <end position="104"/>
    </location>
</feature>
<feature type="disulfide bond" evidence="2">
    <location>
        <begin position="73"/>
        <end position="97"/>
    </location>
</feature>
<feature type="disulfide bond" evidence="2">
    <location>
        <begin position="91"/>
        <end position="102"/>
    </location>
</feature>
<name>PA2B_DEIAC</name>
<accession>Q1ZY03</accession>
<comment type="function">
    <text evidence="1">Snake venom phospholipase A2 (PLA2) that inhibits neuromuscular transmission by blocking acetylcholine release from the nerve termini. PLA2 catalyzes the calcium-dependent hydrolysis of the 2-acyl groups in 3-sn-phosphoglycerides (By similarity).</text>
</comment>
<comment type="catalytic activity">
    <reaction evidence="3 4 6">
        <text>a 1,2-diacyl-sn-glycero-3-phosphocholine + H2O = a 1-acyl-sn-glycero-3-phosphocholine + a fatty acid + H(+)</text>
        <dbReference type="Rhea" id="RHEA:15801"/>
        <dbReference type="ChEBI" id="CHEBI:15377"/>
        <dbReference type="ChEBI" id="CHEBI:15378"/>
        <dbReference type="ChEBI" id="CHEBI:28868"/>
        <dbReference type="ChEBI" id="CHEBI:57643"/>
        <dbReference type="ChEBI" id="CHEBI:58168"/>
        <dbReference type="EC" id="3.1.1.4"/>
    </reaction>
</comment>
<comment type="cofactor">
    <cofactor evidence="1">
        <name>Ca(2+)</name>
        <dbReference type="ChEBI" id="CHEBI:29108"/>
    </cofactor>
    <text evidence="1">Binds 1 Ca(2+) ion.</text>
</comment>
<comment type="subcellular location">
    <subcellularLocation>
        <location evidence="5">Secreted</location>
    </subcellularLocation>
</comment>
<comment type="tissue specificity">
    <text evidence="9">Expressed by the venom gland.</text>
</comment>
<comment type="mass spectrometry"/>
<comment type="similarity">
    <text evidence="8">Belongs to the phospholipase A2 family. Group II subfamily. D49 sub-subfamily.</text>
</comment>
<sequence>MRTLWIVAVLLVSVEGHLLQFNKMIKIMTRKNAFPFYTSYGCYCGWGGRGWPKDATDSCCFVHDCCYQKLTGCSPKWDIYPYSWKTGVIICGEGTPCEKEICECDRAAAVCLGENLRTYKTKYMFYPDFLCKKPSKQC</sequence>
<keyword id="KW-0106">Calcium</keyword>
<keyword id="KW-0903">Direct protein sequencing</keyword>
<keyword id="KW-1015">Disulfide bond</keyword>
<keyword id="KW-0378">Hydrolase</keyword>
<keyword id="KW-0442">Lipid degradation</keyword>
<keyword id="KW-0443">Lipid metabolism</keyword>
<keyword id="KW-0479">Metal-binding</keyword>
<keyword id="KW-0528">Neurotoxin</keyword>
<keyword id="KW-0638">Presynaptic neurotoxin</keyword>
<keyword id="KW-0964">Secreted</keyword>
<keyword id="KW-0732">Signal</keyword>
<keyword id="KW-0800">Toxin</keyword>
<evidence type="ECO:0000250" key="1"/>
<evidence type="ECO:0000250" key="2">
    <source>
        <dbReference type="UniProtKB" id="O42187"/>
    </source>
</evidence>
<evidence type="ECO:0000255" key="3">
    <source>
        <dbReference type="PROSITE-ProRule" id="PRU10035"/>
    </source>
</evidence>
<evidence type="ECO:0000255" key="4">
    <source>
        <dbReference type="PROSITE-ProRule" id="PRU10036"/>
    </source>
</evidence>
<evidence type="ECO:0000269" key="5">
    <source>
    </source>
</evidence>
<evidence type="ECO:0000269" key="6">
    <source>
    </source>
</evidence>
<evidence type="ECO:0000303" key="7">
    <source>
    </source>
</evidence>
<evidence type="ECO:0000305" key="8"/>
<evidence type="ECO:0000305" key="9">
    <source>
    </source>
</evidence>